<proteinExistence type="inferred from homology"/>
<reference key="1">
    <citation type="submission" date="2007-12" db="EMBL/GenBank/DDBJ databases">
        <title>Complete sequence of Methylobacterium extorquens PA1.</title>
        <authorList>
            <consortium name="US DOE Joint Genome Institute"/>
            <person name="Copeland A."/>
            <person name="Lucas S."/>
            <person name="Lapidus A."/>
            <person name="Barry K."/>
            <person name="Glavina del Rio T."/>
            <person name="Dalin E."/>
            <person name="Tice H."/>
            <person name="Pitluck S."/>
            <person name="Saunders E."/>
            <person name="Brettin T."/>
            <person name="Bruce D."/>
            <person name="Detter J.C."/>
            <person name="Han C."/>
            <person name="Schmutz J."/>
            <person name="Larimer F."/>
            <person name="Land M."/>
            <person name="Hauser L."/>
            <person name="Kyrpides N."/>
            <person name="Kim E."/>
            <person name="Marx C."/>
            <person name="Richardson P."/>
        </authorList>
    </citation>
    <scope>NUCLEOTIDE SEQUENCE [LARGE SCALE GENOMIC DNA]</scope>
    <source>
        <strain>PA1</strain>
    </source>
</reference>
<organism>
    <name type="scientific">Methylorubrum extorquens (strain PA1)</name>
    <name type="common">Methylobacterium extorquens</name>
    <dbReference type="NCBI Taxonomy" id="419610"/>
    <lineage>
        <taxon>Bacteria</taxon>
        <taxon>Pseudomonadati</taxon>
        <taxon>Pseudomonadota</taxon>
        <taxon>Alphaproteobacteria</taxon>
        <taxon>Hyphomicrobiales</taxon>
        <taxon>Methylobacteriaceae</taxon>
        <taxon>Methylorubrum</taxon>
    </lineage>
</organism>
<protein>
    <recommendedName>
        <fullName evidence="1">Small ribosomal subunit protein uS13</fullName>
    </recommendedName>
    <alternativeName>
        <fullName evidence="3">30S ribosomal protein S13</fullName>
    </alternativeName>
</protein>
<sequence>MARIAGVNIPTAKRVVIALQYIHGIGPKKAEEITEKVGIPAERRVNQLTDAEVLQIREAIDRDYIVEGDLRREVSMNIKRLMDLGCYRGLRHRKQLPVRGQRTHTNARTRKGKAKPIAGKKK</sequence>
<comment type="function">
    <text evidence="1">Located at the top of the head of the 30S subunit, it contacts several helices of the 16S rRNA. In the 70S ribosome it contacts the 23S rRNA (bridge B1a) and protein L5 of the 50S subunit (bridge B1b), connecting the 2 subunits; these bridges are implicated in subunit movement. Contacts the tRNAs in the A and P-sites.</text>
</comment>
<comment type="subunit">
    <text evidence="1">Part of the 30S ribosomal subunit. Forms a loose heterodimer with protein S19. Forms two bridges to the 50S subunit in the 70S ribosome.</text>
</comment>
<comment type="similarity">
    <text evidence="1">Belongs to the universal ribosomal protein uS13 family.</text>
</comment>
<accession>A9W4R8</accession>
<evidence type="ECO:0000255" key="1">
    <source>
        <dbReference type="HAMAP-Rule" id="MF_01315"/>
    </source>
</evidence>
<evidence type="ECO:0000256" key="2">
    <source>
        <dbReference type="SAM" id="MobiDB-lite"/>
    </source>
</evidence>
<evidence type="ECO:0000305" key="3"/>
<dbReference type="EMBL" id="CP000908">
    <property type="protein sequence ID" value="ABY30574.1"/>
    <property type="molecule type" value="Genomic_DNA"/>
</dbReference>
<dbReference type="RefSeq" id="WP_003597120.1">
    <property type="nucleotide sequence ID" value="NC_010172.1"/>
</dbReference>
<dbReference type="SMR" id="A9W4R8"/>
<dbReference type="GeneID" id="72989867"/>
<dbReference type="KEGG" id="mex:Mext_2179"/>
<dbReference type="eggNOG" id="COG0099">
    <property type="taxonomic scope" value="Bacteria"/>
</dbReference>
<dbReference type="HOGENOM" id="CLU_103849_1_2_5"/>
<dbReference type="BioCyc" id="MEXT419610:MEXT_RS11000-MONOMER"/>
<dbReference type="GO" id="GO:0005829">
    <property type="term" value="C:cytosol"/>
    <property type="evidence" value="ECO:0007669"/>
    <property type="project" value="TreeGrafter"/>
</dbReference>
<dbReference type="GO" id="GO:0015935">
    <property type="term" value="C:small ribosomal subunit"/>
    <property type="evidence" value="ECO:0007669"/>
    <property type="project" value="TreeGrafter"/>
</dbReference>
<dbReference type="GO" id="GO:0019843">
    <property type="term" value="F:rRNA binding"/>
    <property type="evidence" value="ECO:0007669"/>
    <property type="project" value="UniProtKB-UniRule"/>
</dbReference>
<dbReference type="GO" id="GO:0003735">
    <property type="term" value="F:structural constituent of ribosome"/>
    <property type="evidence" value="ECO:0007669"/>
    <property type="project" value="InterPro"/>
</dbReference>
<dbReference type="GO" id="GO:0000049">
    <property type="term" value="F:tRNA binding"/>
    <property type="evidence" value="ECO:0007669"/>
    <property type="project" value="UniProtKB-UniRule"/>
</dbReference>
<dbReference type="GO" id="GO:0006412">
    <property type="term" value="P:translation"/>
    <property type="evidence" value="ECO:0007669"/>
    <property type="project" value="UniProtKB-UniRule"/>
</dbReference>
<dbReference type="FunFam" id="1.10.8.50:FF:000001">
    <property type="entry name" value="30S ribosomal protein S13"/>
    <property type="match status" value="1"/>
</dbReference>
<dbReference type="FunFam" id="4.10.910.10:FF:000001">
    <property type="entry name" value="30S ribosomal protein S13"/>
    <property type="match status" value="1"/>
</dbReference>
<dbReference type="Gene3D" id="1.10.8.50">
    <property type="match status" value="1"/>
</dbReference>
<dbReference type="Gene3D" id="4.10.910.10">
    <property type="entry name" value="30s ribosomal protein s13, domain 2"/>
    <property type="match status" value="1"/>
</dbReference>
<dbReference type="HAMAP" id="MF_01315">
    <property type="entry name" value="Ribosomal_uS13"/>
    <property type="match status" value="1"/>
</dbReference>
<dbReference type="InterPro" id="IPR027437">
    <property type="entry name" value="Rbsml_uS13_C"/>
</dbReference>
<dbReference type="InterPro" id="IPR001892">
    <property type="entry name" value="Ribosomal_uS13"/>
</dbReference>
<dbReference type="InterPro" id="IPR010979">
    <property type="entry name" value="Ribosomal_uS13-like_H2TH"/>
</dbReference>
<dbReference type="InterPro" id="IPR019980">
    <property type="entry name" value="Ribosomal_uS13_bac-type"/>
</dbReference>
<dbReference type="NCBIfam" id="TIGR03631">
    <property type="entry name" value="uS13_bact"/>
    <property type="match status" value="1"/>
</dbReference>
<dbReference type="PANTHER" id="PTHR10871">
    <property type="entry name" value="30S RIBOSOMAL PROTEIN S13/40S RIBOSOMAL PROTEIN S18"/>
    <property type="match status" value="1"/>
</dbReference>
<dbReference type="PANTHER" id="PTHR10871:SF1">
    <property type="entry name" value="SMALL RIBOSOMAL SUBUNIT PROTEIN US13M"/>
    <property type="match status" value="1"/>
</dbReference>
<dbReference type="Pfam" id="PF00416">
    <property type="entry name" value="Ribosomal_S13"/>
    <property type="match status" value="1"/>
</dbReference>
<dbReference type="PIRSF" id="PIRSF002134">
    <property type="entry name" value="Ribosomal_S13"/>
    <property type="match status" value="1"/>
</dbReference>
<dbReference type="SUPFAM" id="SSF46946">
    <property type="entry name" value="S13-like H2TH domain"/>
    <property type="match status" value="1"/>
</dbReference>
<dbReference type="PROSITE" id="PS50159">
    <property type="entry name" value="RIBOSOMAL_S13_2"/>
    <property type="match status" value="1"/>
</dbReference>
<gene>
    <name evidence="1" type="primary">rpsM</name>
    <name type="ordered locus">Mext_2179</name>
</gene>
<name>RS13_METEP</name>
<keyword id="KW-0687">Ribonucleoprotein</keyword>
<keyword id="KW-0689">Ribosomal protein</keyword>
<keyword id="KW-0694">RNA-binding</keyword>
<keyword id="KW-0699">rRNA-binding</keyword>
<keyword id="KW-0820">tRNA-binding</keyword>
<feature type="chain" id="PRO_1000141284" description="Small ribosomal subunit protein uS13">
    <location>
        <begin position="1"/>
        <end position="122"/>
    </location>
</feature>
<feature type="region of interest" description="Disordered" evidence="2">
    <location>
        <begin position="94"/>
        <end position="122"/>
    </location>
</feature>